<protein>
    <recommendedName>
        <fullName>Quinol oxidase subunit 1</fullName>
        <ecNumber>1.10.3.-</ecNumber>
    </recommendedName>
    <alternativeName>
        <fullName>Oxidase aa(3)-600 subunit 1</fullName>
    </alternativeName>
    <alternativeName>
        <fullName>Quinol oxidase aa3-600, subunit qoxB</fullName>
    </alternativeName>
    <alternativeName>
        <fullName>Quinol oxidase polypeptide I</fullName>
    </alternativeName>
</protein>
<sequence length="649" mass="73821">MKFKWDEFFVTGDPLILGAQVSIALSTIAIIFVLTYFKKWKWLWSEWITTVDHKKLGIMYIISAVIMLFRGGVDGLMMRAQLALPNNSFLDSNHYNEIFTTHGTIMIIFMAMPFLIGLINVVVPLQIGARDVAFPYLNNLSFWTFFVGAMLFNISFVIGGSPNAGWTSYMPLASNDMSPGPGENYYLLGLQIAGIGTLMTGINFMVTILKMRTKGMTLMRMPMFTWTTLITMVIIVFAFPVLTVALALLSFDRLFGAHFFTLEAGGMPMLWANLFWIWGHPEVYIVILPAFGIFSEIISSFARKQLFGYTAMVGSIIAISVLSFLVWTHHFFTMGNSASVNSFFSITTMAISIPTGVKIFNWLFTMYKGRISFTTPMLWALAFIPNFVIGGVTGVMLAMAAADYQYHNTYFLVSHFHYVLIAGTVFACFAGFIFWYPKMFGHKLNERIGKWFFWIFMIGFNICFFPQYFLGLQGMPRRIYTYGPNDGWTTLNFISTVGAFMMGVGFLILCYNIYYSFRYSTREISGDSWGVGRSLDWATSSAIPPHYNFAVLPEVKSKDAFHHMKEEKTELYPESKFKKIHMPSNSGRPFFMSVAFGIAGFGLVFEWYWMGVVGLIGVLLCMVLRSFEYDNGYYISVDEIKETERKISE</sequence>
<gene>
    <name type="primary">qoxB</name>
    <name type="ordered locus">BSUW23_18870</name>
</gene>
<comment type="function">
    <text>Catalyzes quinol oxidation with the concomitant reduction of oxygen to water. Major component for energy conversion during vegetative growth.</text>
</comment>
<comment type="catalytic activity">
    <reaction>
        <text>2 a quinol + O2 = 2 a quinone + 2 H2O</text>
        <dbReference type="Rhea" id="RHEA:55376"/>
        <dbReference type="ChEBI" id="CHEBI:15377"/>
        <dbReference type="ChEBI" id="CHEBI:15379"/>
        <dbReference type="ChEBI" id="CHEBI:24646"/>
        <dbReference type="ChEBI" id="CHEBI:132124"/>
    </reaction>
</comment>
<comment type="cofactor">
    <cofactor>
        <name>Cu cation</name>
        <dbReference type="ChEBI" id="CHEBI:23378"/>
    </cofactor>
    <text>Binds a copper B center.</text>
</comment>
<comment type="cofactor">
    <cofactor>
        <name>ferriheme a</name>
        <dbReference type="ChEBI" id="CHEBI:60532"/>
    </cofactor>
</comment>
<comment type="cofactor">
    <text>Heme A3.</text>
</comment>
<comment type="pathway">
    <text>Energy metabolism; oxidative phosphorylation.</text>
</comment>
<comment type="subcellular location">
    <subcellularLocation>
        <location>Cell membrane</location>
        <topology>Multi-pass membrane protein</topology>
    </subcellularLocation>
</comment>
<comment type="similarity">
    <text evidence="3">Belongs to the heme-copper respiratory oxidase family.</text>
</comment>
<reference key="1">
    <citation type="journal article" date="2011" name="Microbiology">
        <title>The genome sequence of Bacillus subtilis subsp. spizizenii W23: insights into speciation within the B. subtilis complex and into the history of B. subtilis genetics.</title>
        <authorList>
            <person name="Zeigler D.R."/>
        </authorList>
    </citation>
    <scope>NUCLEOTIDE SEQUENCE [LARGE SCALE GENOMIC DNA]</scope>
    <source>
        <strain>ATCC 23059 / NRRL B-14472 / W23</strain>
    </source>
</reference>
<reference key="2">
    <citation type="journal article" date="1995" name="Arch. Microbiol.">
        <title>Properties of the menaquinol oxidase (Qox) and of qox deletion mutants of Bacillus subtilis.</title>
        <authorList>
            <person name="Lemma E."/>
            <person name="Simon J."/>
            <person name="Schagger H."/>
            <person name="Kroger A."/>
        </authorList>
    </citation>
    <scope>CHARACTERIZATION</scope>
    <source>
        <strain>ATCC 23059 / NRRL B-14472 / W23</strain>
    </source>
</reference>
<dbReference type="EC" id="1.10.3.-"/>
<dbReference type="EMBL" id="CP002183">
    <property type="protein sequence ID" value="ADM39808.1"/>
    <property type="molecule type" value="Genomic_DNA"/>
</dbReference>
<dbReference type="RefSeq" id="WP_003222173.1">
    <property type="nucleotide sequence ID" value="NZ_CP148102.1"/>
</dbReference>
<dbReference type="SMR" id="E0TW66"/>
<dbReference type="GeneID" id="76980326"/>
<dbReference type="KEGG" id="bss:BSUW23_18870"/>
<dbReference type="HOGENOM" id="CLU_011899_7_1_9"/>
<dbReference type="UniPathway" id="UPA00705"/>
<dbReference type="Proteomes" id="UP000002233">
    <property type="component" value="Chromosome"/>
</dbReference>
<dbReference type="GO" id="GO:0005886">
    <property type="term" value="C:plasma membrane"/>
    <property type="evidence" value="ECO:0007669"/>
    <property type="project" value="UniProtKB-SubCell"/>
</dbReference>
<dbReference type="GO" id="GO:0005507">
    <property type="term" value="F:copper ion binding"/>
    <property type="evidence" value="ECO:0007669"/>
    <property type="project" value="InterPro"/>
</dbReference>
<dbReference type="GO" id="GO:0004129">
    <property type="term" value="F:cytochrome-c oxidase activity"/>
    <property type="evidence" value="ECO:0007669"/>
    <property type="project" value="InterPro"/>
</dbReference>
<dbReference type="GO" id="GO:0020037">
    <property type="term" value="F:heme binding"/>
    <property type="evidence" value="ECO:0007669"/>
    <property type="project" value="InterPro"/>
</dbReference>
<dbReference type="GO" id="GO:0016682">
    <property type="term" value="F:oxidoreductase activity, acting on diphenols and related substances as donors, oxygen as acceptor"/>
    <property type="evidence" value="ECO:0007669"/>
    <property type="project" value="InterPro"/>
</dbReference>
<dbReference type="GO" id="GO:0015990">
    <property type="term" value="P:electron transport coupled proton transport"/>
    <property type="evidence" value="ECO:0007669"/>
    <property type="project" value="TreeGrafter"/>
</dbReference>
<dbReference type="GO" id="GO:0006119">
    <property type="term" value="P:oxidative phosphorylation"/>
    <property type="evidence" value="ECO:0007669"/>
    <property type="project" value="UniProtKB-UniPathway"/>
</dbReference>
<dbReference type="GO" id="GO:0022904">
    <property type="term" value="P:respiratory electron transport chain"/>
    <property type="evidence" value="ECO:0007669"/>
    <property type="project" value="TreeGrafter"/>
</dbReference>
<dbReference type="CDD" id="cd01662">
    <property type="entry name" value="Ubiquinol_Oxidase_I"/>
    <property type="match status" value="1"/>
</dbReference>
<dbReference type="FunFam" id="1.20.210.10:FF:000002">
    <property type="entry name" value="Cytochrome o ubiquinol oxidase, subunit I"/>
    <property type="match status" value="1"/>
</dbReference>
<dbReference type="Gene3D" id="1.10.287.70">
    <property type="match status" value="1"/>
</dbReference>
<dbReference type="Gene3D" id="1.20.210.10">
    <property type="entry name" value="Cytochrome c oxidase-like, subunit I domain"/>
    <property type="match status" value="1"/>
</dbReference>
<dbReference type="InterPro" id="IPR023616">
    <property type="entry name" value="Cyt_c_oxase-like_su1_dom"/>
</dbReference>
<dbReference type="InterPro" id="IPR036927">
    <property type="entry name" value="Cyt_c_oxase-like_su1_sf"/>
</dbReference>
<dbReference type="InterPro" id="IPR000883">
    <property type="entry name" value="Cyt_C_Oxase_1"/>
</dbReference>
<dbReference type="InterPro" id="IPR023615">
    <property type="entry name" value="Cyt_c_Oxase_su1_BS"/>
</dbReference>
<dbReference type="InterPro" id="IPR014233">
    <property type="entry name" value="QoxB"/>
</dbReference>
<dbReference type="NCBIfam" id="TIGR02882">
    <property type="entry name" value="QoxB"/>
    <property type="match status" value="1"/>
</dbReference>
<dbReference type="PANTHER" id="PTHR10422:SF35">
    <property type="entry name" value="CYTOCHROME BO(3) UBIQUINOL OXIDASE SUBUNIT 1"/>
    <property type="match status" value="1"/>
</dbReference>
<dbReference type="PANTHER" id="PTHR10422">
    <property type="entry name" value="CYTOCHROME C OXIDASE SUBUNIT 1"/>
    <property type="match status" value="1"/>
</dbReference>
<dbReference type="Pfam" id="PF00115">
    <property type="entry name" value="COX1"/>
    <property type="match status" value="1"/>
</dbReference>
<dbReference type="PRINTS" id="PR01165">
    <property type="entry name" value="CYCOXIDASEI"/>
</dbReference>
<dbReference type="SUPFAM" id="SSF81442">
    <property type="entry name" value="Cytochrome c oxidase subunit I-like"/>
    <property type="match status" value="1"/>
</dbReference>
<dbReference type="PROSITE" id="PS50855">
    <property type="entry name" value="COX1"/>
    <property type="match status" value="1"/>
</dbReference>
<dbReference type="PROSITE" id="PS00077">
    <property type="entry name" value="COX1_CUB"/>
    <property type="match status" value="1"/>
</dbReference>
<feature type="chain" id="PRO_0000402829" description="Quinol oxidase subunit 1">
    <location>
        <begin position="1"/>
        <end position="649"/>
    </location>
</feature>
<feature type="topological domain" description="Extracellular" evidence="2">
    <location>
        <begin position="1"/>
        <end position="13"/>
    </location>
</feature>
<feature type="transmembrane region" description="Helical" evidence="2">
    <location>
        <begin position="14"/>
        <end position="34"/>
    </location>
</feature>
<feature type="topological domain" description="Cytoplasmic" evidence="2">
    <location>
        <begin position="35"/>
        <end position="55"/>
    </location>
</feature>
<feature type="transmembrane region" description="Helical" evidence="2">
    <location>
        <begin position="56"/>
        <end position="76"/>
    </location>
</feature>
<feature type="topological domain" description="Extracellular" evidence="2">
    <location>
        <begin position="77"/>
        <end position="104"/>
    </location>
</feature>
<feature type="transmembrane region" description="Helical" evidence="2">
    <location>
        <begin position="105"/>
        <end position="125"/>
    </location>
</feature>
<feature type="topological domain" description="Cytoplasmic" evidence="2">
    <location>
        <begin position="126"/>
        <end position="139"/>
    </location>
</feature>
<feature type="transmembrane region" description="Helical" evidence="2">
    <location>
        <begin position="140"/>
        <end position="160"/>
    </location>
</feature>
<feature type="topological domain" description="Extracellular" evidence="2">
    <location>
        <begin position="161"/>
        <end position="187"/>
    </location>
</feature>
<feature type="transmembrane region" description="Helical" evidence="2">
    <location>
        <begin position="188"/>
        <end position="208"/>
    </location>
</feature>
<feature type="topological domain" description="Cytoplasmic" evidence="2">
    <location>
        <begin position="209"/>
        <end position="228"/>
    </location>
</feature>
<feature type="transmembrane region" description="Helical" evidence="2">
    <location>
        <begin position="229"/>
        <end position="249"/>
    </location>
</feature>
<feature type="topological domain" description="Extracellular" evidence="2">
    <location>
        <begin position="250"/>
        <end position="273"/>
    </location>
</feature>
<feature type="transmembrane region" description="Helical" evidence="2">
    <location>
        <begin position="274"/>
        <end position="294"/>
    </location>
</feature>
<feature type="topological domain" description="Cytoplasmic" evidence="2">
    <location>
        <begin position="295"/>
        <end position="305"/>
    </location>
</feature>
<feature type="transmembrane region" description="Helical" evidence="2">
    <location>
        <begin position="306"/>
        <end position="326"/>
    </location>
</feature>
<feature type="topological domain" description="Extracellular" evidence="2">
    <location>
        <begin position="327"/>
        <end position="342"/>
    </location>
</feature>
<feature type="transmembrane region" description="Helical" evidence="2">
    <location>
        <begin position="343"/>
        <end position="363"/>
    </location>
</feature>
<feature type="topological domain" description="Cytoplasmic" evidence="2">
    <location>
        <begin position="364"/>
        <end position="376"/>
    </location>
</feature>
<feature type="transmembrane region" description="Helical" evidence="2">
    <location>
        <begin position="377"/>
        <end position="397"/>
    </location>
</feature>
<feature type="topological domain" description="Extracellular" evidence="2">
    <location>
        <begin position="398"/>
        <end position="415"/>
    </location>
</feature>
<feature type="transmembrane region" description="Helical" evidence="2">
    <location>
        <begin position="416"/>
        <end position="436"/>
    </location>
</feature>
<feature type="topological domain" description="Cytoplasmic" evidence="2">
    <location>
        <begin position="437"/>
        <end position="451"/>
    </location>
</feature>
<feature type="transmembrane region" description="Helical" evidence="2">
    <location>
        <begin position="452"/>
        <end position="472"/>
    </location>
</feature>
<feature type="topological domain" description="Extracellular" evidence="2">
    <location>
        <begin position="473"/>
        <end position="492"/>
    </location>
</feature>
<feature type="transmembrane region" description="Helical" evidence="2">
    <location>
        <begin position="493"/>
        <end position="513"/>
    </location>
</feature>
<feature type="topological domain" description="Cytoplasmic" evidence="2">
    <location>
        <begin position="514"/>
        <end position="585"/>
    </location>
</feature>
<feature type="transmembrane region" description="Helical" evidence="2">
    <location>
        <begin position="586"/>
        <end position="603"/>
    </location>
</feature>
<feature type="topological domain" description="Extracellular" evidence="2">
    <location>
        <begin position="604"/>
        <end position="606"/>
    </location>
</feature>
<feature type="transmembrane region" description="Helical" evidence="2">
    <location>
        <begin position="607"/>
        <end position="624"/>
    </location>
</feature>
<feature type="topological domain" description="Cytoplasmic" evidence="2">
    <location>
        <begin position="625"/>
        <end position="649"/>
    </location>
</feature>
<feature type="binding site" description="axial binding residue" evidence="3">
    <location>
        <position position="102"/>
    </location>
    <ligand>
        <name>Fe(II)-heme a</name>
        <dbReference type="ChEBI" id="CHEBI:61715"/>
    </ligand>
    <ligandPart>
        <name>Fe</name>
        <dbReference type="ChEBI" id="CHEBI:18248"/>
    </ligandPart>
</feature>
<feature type="binding site" evidence="3">
    <location>
        <position position="280"/>
    </location>
    <ligand>
        <name>Cu cation</name>
        <dbReference type="ChEBI" id="CHEBI:23378"/>
        <label>B</label>
    </ligand>
</feature>
<feature type="binding site" evidence="3">
    <location>
        <position position="284"/>
    </location>
    <ligand>
        <name>Cu cation</name>
        <dbReference type="ChEBI" id="CHEBI:23378"/>
        <label>B</label>
    </ligand>
</feature>
<feature type="binding site" evidence="3">
    <location>
        <position position="329"/>
    </location>
    <ligand>
        <name>Cu cation</name>
        <dbReference type="ChEBI" id="CHEBI:23378"/>
        <label>B</label>
    </ligand>
</feature>
<feature type="binding site" evidence="3">
    <location>
        <position position="330"/>
    </location>
    <ligand>
        <name>Cu cation</name>
        <dbReference type="ChEBI" id="CHEBI:23378"/>
        <label>B</label>
    </ligand>
</feature>
<feature type="binding site" description="axial binding residue" evidence="3">
    <location>
        <position position="415"/>
    </location>
    <ligand>
        <name>heme a3</name>
        <dbReference type="ChEBI" id="CHEBI:83282"/>
    </ligand>
    <ligandPart>
        <name>Fe</name>
        <dbReference type="ChEBI" id="CHEBI:18248"/>
    </ligandPart>
</feature>
<feature type="binding site" description="axial binding residue" evidence="3">
    <location>
        <position position="417"/>
    </location>
    <ligand>
        <name>Fe(II)-heme a</name>
        <dbReference type="ChEBI" id="CHEBI:61715"/>
    </ligand>
    <ligandPart>
        <name>Fe</name>
        <dbReference type="ChEBI" id="CHEBI:18248"/>
    </ligandPart>
</feature>
<feature type="cross-link" description="1'-histidyl-3'-tyrosine (His-Tyr)" evidence="1">
    <location>
        <begin position="280"/>
        <end position="284"/>
    </location>
</feature>
<proteinExistence type="evidence at protein level"/>
<evidence type="ECO:0000250" key="1"/>
<evidence type="ECO:0000255" key="2"/>
<evidence type="ECO:0000305" key="3"/>
<organism>
    <name type="scientific">Bacillus spizizenii (strain ATCC 23059 / NRRL B-14472 / W23)</name>
    <name type="common">Bacillus subtilis subsp. spizizenii</name>
    <dbReference type="NCBI Taxonomy" id="655816"/>
    <lineage>
        <taxon>Bacteria</taxon>
        <taxon>Bacillati</taxon>
        <taxon>Bacillota</taxon>
        <taxon>Bacilli</taxon>
        <taxon>Bacillales</taxon>
        <taxon>Bacillaceae</taxon>
        <taxon>Bacillus</taxon>
    </lineage>
</organism>
<name>QOX1_BACSH</name>
<accession>E0TW66</accession>
<keyword id="KW-1003">Cell membrane</keyword>
<keyword id="KW-0186">Copper</keyword>
<keyword id="KW-0249">Electron transport</keyword>
<keyword id="KW-0349">Heme</keyword>
<keyword id="KW-0375">Hydrogen ion transport</keyword>
<keyword id="KW-0406">Ion transport</keyword>
<keyword id="KW-0408">Iron</keyword>
<keyword id="KW-0472">Membrane</keyword>
<keyword id="KW-0479">Metal-binding</keyword>
<keyword id="KW-0560">Oxidoreductase</keyword>
<keyword id="KW-0679">Respiratory chain</keyword>
<keyword id="KW-0812">Transmembrane</keyword>
<keyword id="KW-1133">Transmembrane helix</keyword>
<keyword id="KW-0813">Transport</keyword>